<gene>
    <name type="primary">TSPO</name>
    <name type="synonym">BZRP</name>
</gene>
<accession>Q6UN27</accession>
<keyword id="KW-0445">Lipid transport</keyword>
<keyword id="KW-0472">Membrane</keyword>
<keyword id="KW-0496">Mitochondrion</keyword>
<keyword id="KW-0675">Receptor</keyword>
<keyword id="KW-1185">Reference proteome</keyword>
<keyword id="KW-0812">Transmembrane</keyword>
<keyword id="KW-1133">Transmembrane helix</keyword>
<keyword id="KW-0813">Transport</keyword>
<evidence type="ECO:0000250" key="1"/>
<evidence type="ECO:0000269" key="2">
    <source>
    </source>
</evidence>
<evidence type="ECO:0000305" key="3"/>
<name>TSPO_PIG</name>
<protein>
    <recommendedName>
        <fullName>Translocator protein</fullName>
    </recommendedName>
    <alternativeName>
        <fullName>Peripheral-type benzodiazepine receptor</fullName>
        <shortName>PBR</shortName>
    </alternativeName>
</protein>
<feature type="chain" id="PRO_0000331457" description="Translocator protein">
    <location>
        <begin position="1"/>
        <end position="169"/>
    </location>
</feature>
<feature type="topological domain" description="Mitochondrial intermembrane" evidence="1">
    <location>
        <begin position="1"/>
        <end position="5"/>
    </location>
</feature>
<feature type="transmembrane region" description="Helical; Name=1" evidence="1">
    <location>
        <begin position="6"/>
        <end position="26"/>
    </location>
</feature>
<feature type="topological domain" description="Cytoplasmic" evidence="1">
    <location>
        <begin position="27"/>
        <end position="46"/>
    </location>
</feature>
<feature type="transmembrane region" description="Helical; Name=2" evidence="1">
    <location>
        <begin position="47"/>
        <end position="67"/>
    </location>
</feature>
<feature type="topological domain" description="Mitochondrial intermembrane" evidence="1">
    <location>
        <begin position="68"/>
        <end position="79"/>
    </location>
</feature>
<feature type="transmembrane region" description="Helical; Name=3" evidence="1">
    <location>
        <begin position="80"/>
        <end position="100"/>
    </location>
</feature>
<feature type="topological domain" description="Cytoplasmic" evidence="1">
    <location>
        <begin position="101"/>
        <end position="105"/>
    </location>
</feature>
<feature type="transmembrane region" description="Helical; Name=4" evidence="1">
    <location>
        <begin position="106"/>
        <end position="126"/>
    </location>
</feature>
<feature type="topological domain" description="Mitochondrial intermembrane" evidence="1">
    <location>
        <begin position="127"/>
        <end position="134"/>
    </location>
</feature>
<feature type="transmembrane region" description="Helical; Name=5" evidence="1">
    <location>
        <begin position="135"/>
        <end position="155"/>
    </location>
</feature>
<feature type="topological domain" description="Cytoplasmic" evidence="1">
    <location>
        <begin position="156"/>
        <end position="169"/>
    </location>
</feature>
<dbReference type="EMBL" id="AY366497">
    <property type="protein sequence ID" value="AAQ72807.1"/>
    <property type="molecule type" value="mRNA"/>
</dbReference>
<dbReference type="RefSeq" id="NP_998918.1">
    <property type="nucleotide sequence ID" value="NM_213753.1"/>
</dbReference>
<dbReference type="SMR" id="Q6UN27"/>
<dbReference type="FunCoup" id="Q6UN27">
    <property type="interactions" value="78"/>
</dbReference>
<dbReference type="STRING" id="9823.ENSSSCP00000000035"/>
<dbReference type="PaxDb" id="9823-ENSSSCP00000000035"/>
<dbReference type="PeptideAtlas" id="Q6UN27"/>
<dbReference type="Ensembl" id="ENSSSCT00025016911.1">
    <property type="protein sequence ID" value="ENSSSCP00025006754.1"/>
    <property type="gene ID" value="ENSSSCG00025012766.1"/>
</dbReference>
<dbReference type="Ensembl" id="ENSSSCT00035032659.1">
    <property type="protein sequence ID" value="ENSSSCP00035012859.1"/>
    <property type="gene ID" value="ENSSSCG00035024827.1"/>
</dbReference>
<dbReference type="Ensembl" id="ENSSSCT00045014035.1">
    <property type="protein sequence ID" value="ENSSSCP00045009709.1"/>
    <property type="gene ID" value="ENSSSCG00045008320.1"/>
</dbReference>
<dbReference type="Ensembl" id="ENSSSCT00105056347">
    <property type="protein sequence ID" value="ENSSSCP00105039753"/>
    <property type="gene ID" value="ENSSSCG00105029603"/>
</dbReference>
<dbReference type="Ensembl" id="ENSSSCT00110047854">
    <property type="protein sequence ID" value="ENSSSCP00110033663"/>
    <property type="gene ID" value="ENSSSCG00110024782"/>
</dbReference>
<dbReference type="Ensembl" id="ENSSSCT00115020933">
    <property type="protein sequence ID" value="ENSSSCP00115019830"/>
    <property type="gene ID" value="ENSSSCG00115012086"/>
</dbReference>
<dbReference type="GeneID" id="396592"/>
<dbReference type="KEGG" id="ssc:396592"/>
<dbReference type="CTD" id="706"/>
<dbReference type="eggNOG" id="KOG3797">
    <property type="taxonomic scope" value="Eukaryota"/>
</dbReference>
<dbReference type="InParanoid" id="Q6UN27"/>
<dbReference type="OrthoDB" id="8841220at2759"/>
<dbReference type="Proteomes" id="UP000008227">
    <property type="component" value="Unplaced"/>
</dbReference>
<dbReference type="Proteomes" id="UP000314985">
    <property type="component" value="Unplaced"/>
</dbReference>
<dbReference type="Proteomes" id="UP000694570">
    <property type="component" value="Unplaced"/>
</dbReference>
<dbReference type="Proteomes" id="UP000694571">
    <property type="component" value="Unplaced"/>
</dbReference>
<dbReference type="Proteomes" id="UP000694720">
    <property type="component" value="Unplaced"/>
</dbReference>
<dbReference type="Proteomes" id="UP000694722">
    <property type="component" value="Unplaced"/>
</dbReference>
<dbReference type="Proteomes" id="UP000694723">
    <property type="component" value="Unplaced"/>
</dbReference>
<dbReference type="Proteomes" id="UP000694724">
    <property type="component" value="Unplaced"/>
</dbReference>
<dbReference type="Proteomes" id="UP000694725">
    <property type="component" value="Unplaced"/>
</dbReference>
<dbReference type="Proteomes" id="UP000694726">
    <property type="component" value="Unplaced"/>
</dbReference>
<dbReference type="Proteomes" id="UP000694727">
    <property type="component" value="Unplaced"/>
</dbReference>
<dbReference type="Proteomes" id="UP000694728">
    <property type="component" value="Unplaced"/>
</dbReference>
<dbReference type="GO" id="GO:0016020">
    <property type="term" value="C:membrane"/>
    <property type="evidence" value="ECO:0000318"/>
    <property type="project" value="GO_Central"/>
</dbReference>
<dbReference type="GO" id="GO:0031966">
    <property type="term" value="C:mitochondrial membrane"/>
    <property type="evidence" value="ECO:0007669"/>
    <property type="project" value="UniProtKB-SubCell"/>
</dbReference>
<dbReference type="GO" id="GO:0006869">
    <property type="term" value="P:lipid transport"/>
    <property type="evidence" value="ECO:0007669"/>
    <property type="project" value="UniProtKB-KW"/>
</dbReference>
<dbReference type="CDD" id="cd15904">
    <property type="entry name" value="TSPO_MBR"/>
    <property type="match status" value="1"/>
</dbReference>
<dbReference type="FunFam" id="1.20.1260.100:FF:000001">
    <property type="entry name" value="translocator protein 2"/>
    <property type="match status" value="1"/>
</dbReference>
<dbReference type="Gene3D" id="1.20.1260.100">
    <property type="entry name" value="TspO/MBR protein"/>
    <property type="match status" value="1"/>
</dbReference>
<dbReference type="InterPro" id="IPR038330">
    <property type="entry name" value="TspO/MBR-related_sf"/>
</dbReference>
<dbReference type="InterPro" id="IPR004307">
    <property type="entry name" value="TspO_MBR"/>
</dbReference>
<dbReference type="PANTHER" id="PTHR10057">
    <property type="entry name" value="PERIPHERAL-TYPE BENZODIAZEPINE RECEPTOR"/>
    <property type="match status" value="1"/>
</dbReference>
<dbReference type="PANTHER" id="PTHR10057:SF5">
    <property type="entry name" value="TRANSLOCATOR PROTEIN"/>
    <property type="match status" value="1"/>
</dbReference>
<dbReference type="Pfam" id="PF03073">
    <property type="entry name" value="TspO_MBR"/>
    <property type="match status" value="1"/>
</dbReference>
<dbReference type="PIRSF" id="PIRSF005859">
    <property type="entry name" value="PBR"/>
    <property type="match status" value="1"/>
</dbReference>
<comment type="function">
    <text evidence="1">Promotes the transport of cholesterol across mitochondrial membranes and may play a role in lipid metabolism, but its precise physiological role is controversial. It is apparently not required for steroid hormone biosynthesis. Can bind protoporphyrin IX and may play a role in the transport of porphyrins and heme. Was initially identified as peripheral-type benzodiazepine receptor; can also bind isoquinoline carboxamides (By similarity).</text>
</comment>
<comment type="subunit">
    <text evidence="1">Interacts with TSPOAP1. Interacts with MOST-1. May interact with STAR.</text>
</comment>
<comment type="subcellular location">
    <subcellularLocation>
        <location evidence="2">Mitochondrion membrane</location>
        <topology evidence="2">Multi-pass membrane protein</topology>
    </subcellularLocation>
</comment>
<comment type="tissue specificity">
    <text evidence="2">Ubiquitous.</text>
</comment>
<comment type="similarity">
    <text evidence="3">Belongs to the TspO/BZRP family.</text>
</comment>
<reference key="1">
    <citation type="journal article" date="2006" name="Mamm. Genome">
        <title>Cloning, sequencing, and chromosomal localization of pig peripheral benzodiazepine receptor: three different forms produced by alternative splicing.</title>
        <authorList>
            <person name="Zhang K."/>
            <person name="Demeure O."/>
            <person name="Belliard A."/>
            <person name="Goujon J.M."/>
            <person name="Favreau F."/>
            <person name="Desurmont T."/>
            <person name="Mauco G."/>
            <person name="Barriere M."/>
            <person name="Carretier M."/>
            <person name="Milan D."/>
            <person name="Papadopoulos V."/>
            <person name="Hauet T."/>
        </authorList>
    </citation>
    <scope>NUCLEOTIDE SEQUENCE [MRNA]</scope>
    <scope>SUBCELLULAR LOCATION</scope>
    <scope>TISSUE SPECIFICITY</scope>
    <source>
        <tissue>Adrenal gland</tissue>
    </source>
</reference>
<sequence>MAPPWLPAVGFTLVPSLGGFLSSRNVLGKGLHWYAGLQKPSWHPPHWTLAPIWGTLYSAMGYGSYMIWKELGGFSEEAVVPLGLYAGQLALNWAWPPLFFGARQMGWALVDLVLTGGVAAATAVAWYQVSPLAARLLYPYLAWLAFAATLNYCVWRDNQGRRGGRRPSE</sequence>
<organism>
    <name type="scientific">Sus scrofa</name>
    <name type="common">Pig</name>
    <dbReference type="NCBI Taxonomy" id="9823"/>
    <lineage>
        <taxon>Eukaryota</taxon>
        <taxon>Metazoa</taxon>
        <taxon>Chordata</taxon>
        <taxon>Craniata</taxon>
        <taxon>Vertebrata</taxon>
        <taxon>Euteleostomi</taxon>
        <taxon>Mammalia</taxon>
        <taxon>Eutheria</taxon>
        <taxon>Laurasiatheria</taxon>
        <taxon>Artiodactyla</taxon>
        <taxon>Suina</taxon>
        <taxon>Suidae</taxon>
        <taxon>Sus</taxon>
    </lineage>
</organism>
<proteinExistence type="evidence at transcript level"/>